<gene>
    <name type="primary">BUD4</name>
    <name type="ORF">SCY_3008</name>
</gene>
<keyword id="KW-0131">Cell cycle</keyword>
<keyword id="KW-0132">Cell division</keyword>
<keyword id="KW-0597">Phosphoprotein</keyword>
<sequence>MHDAESTVDSLLKEIDNEMEQTKSNITQNGSEDTPHNWKLPLQEIGDDTMEMLVKHNTRSNATENSRGRSPSKMSTISNESLNLGLLRVNSELEESPAAVHQERIKNSVANGALGHANSPKVLNNLKNMAQDIDKLARDEEKPVKLSSSPLKFTLKSTQPLLSYPESPIHRSSIEIETNYDDEDEEEEDAYTCLTQSPQILHSPSRIPITNAVSINKLNLDFTLNPNESDKSLVSDTSVDSTGRELDTKTIPELPFCMSSTPEMTPVDEKCNLPSKLLNTSNNSHSDSRSPTASVEDLNISTNLPGADSSQNNPVTTDADALIENDVVRDLQQNMEHIDDAFDEKKVLDEGCSNEPVTFLGENDTRSIVYSNKGTNANVQEFSQEDSLAHSEPNFKDLNATSDDVWNEDKETDANISTSTKSEESYIADYKVTRQEDWDTKKLHQESEHANEQPAIIPQKDSSEETFTELNNESEFQRNSKDGEEYRIVQHEESLYGQRTKSSEENIINGSEIGVDHGEADEVNEPLAKTSAEEHDLSSSCEDQSVSEARNKDSIEEKEVETKDENIETEKDESEYHKVEENEESEHVPLLPPLPRWEEIQFNEPFIDENDTSNDSIDLTRSMKPSDYISIWHIQEEEIKSNSPESIANSQFSQQSSITTASTVDSKKDNGSTSFKFKPRIVSRSRIYNPKSRVSSLNYYDNEDYILSNSEWNALDPMRRNTLISKRIQDNIRTQKGHAPLIRPSVMKLNGEDSGFQNHFLEVEQPQEHENIPLSTHLSEQDITTNVGLDEQKLPTNTQDEAEISIREIESAGDITFNRGDLLSLSFDEELGQDFANFLDALDHDSTSFNHGPDDSSSFQRDSSKKSFNSLWESSYELKPPPSIRKQPIAPDVLQKLLESDTKDDADLEKIREERITEPRTGLGIGMLKTPVKDVSIALAASIKGYEASFSDTDSRPEGMNNSDAITLNMFDDFEEDKMTPSTPVRSISPIKRHVSSPFKVVKAGNKQENNEINIKAEEEIEPMTQQETDGLKQDIPPLLAQTKDNVEAKEETITQLEEPQDVEQEFPDMGTLYLSIKAISTLALYGTKSHRATYAIVFDNGENVVQTPWESLPYDGNIRINKEFELPIDFKGKAETSSASSERDSYKKCVITLKCKYEKPRHELVEIVDKVPVGKSFFGKTKYKFEKKYVQKKPKQDEWDYLFAQDGSFARCEIEINEEFLKNVAFNTSHMHYNMINKWSRIADKIHGSKRLYELPRKAPHKVASLDVEACFLERTSAFEQFPKQFSLVNKIVSKYKLQQNIYKEGYLLQDGGDLKGKIENRFFKLHGSQLSGYHEISRKAKIDINLLKVTKVLRNEDIQADNGGQRNFTDWVLFNECFQLVFDDGERITFNAECSNEEKSDWYNKLQEVVELNVFHQPWVKKYCEKLAEEEKTRTTGHNLKQDFN</sequence>
<accession>A6ZQ47</accession>
<name>BUD4_YEAS7</name>
<dbReference type="EMBL" id="AAFW02000040">
    <property type="protein sequence ID" value="EDN63407.1"/>
    <property type="molecule type" value="Genomic_DNA"/>
</dbReference>
<dbReference type="HOGENOM" id="CLU_004727_0_0_1"/>
<dbReference type="OrthoDB" id="38203at4893"/>
<dbReference type="Proteomes" id="UP000007060">
    <property type="component" value="Unassembled WGS sequence"/>
</dbReference>
<dbReference type="GO" id="GO:0000142">
    <property type="term" value="C:cellular bud neck contractile ring"/>
    <property type="evidence" value="ECO:0007669"/>
    <property type="project" value="TreeGrafter"/>
</dbReference>
<dbReference type="GO" id="GO:0005525">
    <property type="term" value="F:GTP binding"/>
    <property type="evidence" value="ECO:0007669"/>
    <property type="project" value="TreeGrafter"/>
</dbReference>
<dbReference type="GO" id="GO:0007120">
    <property type="term" value="P:axial cellular bud site selection"/>
    <property type="evidence" value="ECO:0007669"/>
    <property type="project" value="TreeGrafter"/>
</dbReference>
<dbReference type="GO" id="GO:0097271">
    <property type="term" value="P:protein localization to bud neck"/>
    <property type="evidence" value="ECO:0007669"/>
    <property type="project" value="TreeGrafter"/>
</dbReference>
<dbReference type="CDD" id="cd13278">
    <property type="entry name" value="PH_Bud4"/>
    <property type="match status" value="1"/>
</dbReference>
<dbReference type="Gene3D" id="2.30.29.30">
    <property type="entry name" value="Pleckstrin-homology domain (PH domain)/Phosphotyrosine-binding domain (PTB)"/>
    <property type="match status" value="1"/>
</dbReference>
<dbReference type="InterPro" id="IPR052007">
    <property type="entry name" value="Bud4"/>
</dbReference>
<dbReference type="InterPro" id="IPR011993">
    <property type="entry name" value="PH-like_dom_sf"/>
</dbReference>
<dbReference type="InterPro" id="IPR001849">
    <property type="entry name" value="PH_domain"/>
</dbReference>
<dbReference type="PANTHER" id="PTHR36100">
    <property type="entry name" value="BUD SITE SELECTION PROTEIN 4"/>
    <property type="match status" value="1"/>
</dbReference>
<dbReference type="PANTHER" id="PTHR36100:SF1">
    <property type="entry name" value="BUD SITE SELECTION PROTEIN 4"/>
    <property type="match status" value="1"/>
</dbReference>
<dbReference type="Pfam" id="PF00169">
    <property type="entry name" value="PH"/>
    <property type="match status" value="1"/>
</dbReference>
<dbReference type="SMART" id="SM00233">
    <property type="entry name" value="PH"/>
    <property type="match status" value="1"/>
</dbReference>
<dbReference type="SUPFAM" id="SSF50729">
    <property type="entry name" value="PH domain-like"/>
    <property type="match status" value="1"/>
</dbReference>
<dbReference type="PROSITE" id="PS50003">
    <property type="entry name" value="PH_DOMAIN"/>
    <property type="match status" value="1"/>
</dbReference>
<protein>
    <recommendedName>
        <fullName>Bud site selection protein 4</fullName>
    </recommendedName>
</protein>
<feature type="chain" id="PRO_0000330081" description="Bud site selection protein 4">
    <location>
        <begin position="1"/>
        <end position="1447"/>
    </location>
</feature>
<feature type="domain" description="PH" evidence="3">
    <location>
        <begin position="1302"/>
        <end position="1413"/>
    </location>
</feature>
<feature type="region of interest" description="Disordered" evidence="4">
    <location>
        <begin position="1"/>
        <end position="37"/>
    </location>
</feature>
<feature type="region of interest" description="Disordered" evidence="4">
    <location>
        <begin position="57"/>
        <end position="76"/>
    </location>
</feature>
<feature type="region of interest" description="Disordered" evidence="4">
    <location>
        <begin position="272"/>
        <end position="316"/>
    </location>
</feature>
<feature type="region of interest" description="Disordered" evidence="4">
    <location>
        <begin position="444"/>
        <end position="588"/>
    </location>
</feature>
<feature type="region of interest" description="Disordered" evidence="4">
    <location>
        <begin position="649"/>
        <end position="672"/>
    </location>
</feature>
<feature type="region of interest" description="Interaction with IQG1" evidence="1">
    <location>
        <begin position="768"/>
        <end position="879"/>
    </location>
</feature>
<feature type="compositionally biased region" description="Basic and acidic residues" evidence="4">
    <location>
        <begin position="1"/>
        <end position="16"/>
    </location>
</feature>
<feature type="compositionally biased region" description="Polar residues" evidence="4">
    <location>
        <begin position="22"/>
        <end position="32"/>
    </location>
</feature>
<feature type="compositionally biased region" description="Polar residues" evidence="4">
    <location>
        <begin position="59"/>
        <end position="76"/>
    </location>
</feature>
<feature type="compositionally biased region" description="Polar residues" evidence="4">
    <location>
        <begin position="277"/>
        <end position="316"/>
    </location>
</feature>
<feature type="compositionally biased region" description="Basic and acidic residues" evidence="4">
    <location>
        <begin position="475"/>
        <end position="494"/>
    </location>
</feature>
<feature type="compositionally biased region" description="Polar residues" evidence="4">
    <location>
        <begin position="497"/>
        <end position="509"/>
    </location>
</feature>
<feature type="compositionally biased region" description="Polar residues" evidence="4">
    <location>
        <begin position="538"/>
        <end position="548"/>
    </location>
</feature>
<feature type="compositionally biased region" description="Basic and acidic residues" evidence="4">
    <location>
        <begin position="549"/>
        <end position="580"/>
    </location>
</feature>
<feature type="compositionally biased region" description="Polar residues" evidence="4">
    <location>
        <begin position="649"/>
        <end position="664"/>
    </location>
</feature>
<feature type="modified residue" description="Phosphoserine" evidence="2">
    <location>
        <position position="10"/>
    </location>
</feature>
<feature type="modified residue" description="Phosphoserine" evidence="2">
    <location>
        <position position="78"/>
    </location>
</feature>
<feature type="modified residue" description="Phosphoserine" evidence="2">
    <location>
        <position position="81"/>
    </location>
</feature>
<feature type="modified residue" description="Phosphoserine" evidence="2">
    <location>
        <position position="91"/>
    </location>
</feature>
<feature type="modified residue" description="Phosphoserine" evidence="2">
    <location>
        <position position="96"/>
    </location>
</feature>
<feature type="modified residue" description="Phosphoserine" evidence="2">
    <location>
        <position position="167"/>
    </location>
</feature>
<feature type="modified residue" description="Phosphothreonine" evidence="2">
    <location>
        <position position="365"/>
    </location>
</feature>
<feature type="modified residue" description="Phosphoserine" evidence="2">
    <location>
        <position position="367"/>
    </location>
</feature>
<feature type="modified residue" description="Phosphoserine" evidence="2">
    <location>
        <position position="511"/>
    </location>
</feature>
<feature type="modified residue" description="Phosphoserine" evidence="2">
    <location>
        <position position="616"/>
    </location>
</feature>
<feature type="modified residue" description="Phosphoserine" evidence="2">
    <location>
        <position position="805"/>
    </location>
</feature>
<feature type="modified residue" description="Phosphoserine" evidence="2">
    <location>
        <position position="811"/>
    </location>
</feature>
<comment type="function">
    <text evidence="1">Required for establishment of the axial budding pattern in haploid cells. Cooperates with other bud site selection proteins to recognize a spatial landmark during mitosis and they subsequently become a landmark for downstream polarity establishment factors that coordinate axial budding and cytokinesis. Involved in the septin organization at the bud neck (By similarity).</text>
</comment>
<comment type="subunit">
    <text evidence="1">Interacts with AXL1, IQG1 and SEC3.</text>
</comment>
<comment type="subcellular location">
    <subcellularLocation>
        <location>Bud neck</location>
    </subcellularLocation>
    <text evidence="1">Localizes to two distinct rings on either side of the mother-bud neck. The rings stay present in cells after cytokinesis and disappear before the next bud emergence. Requires IQG1 for proper localization (By similarity).</text>
</comment>
<comment type="induction">
    <text evidence="1">Cell cycle-dependent with low levels at START and a peak in mitosis (at protein level).</text>
</comment>
<comment type="PTM">
    <text evidence="1">Phosphorylated by CDC28.</text>
</comment>
<comment type="similarity">
    <text evidence="5">Belongs to the BUD4 family.</text>
</comment>
<reference key="1">
    <citation type="journal article" date="2007" name="Proc. Natl. Acad. Sci. U.S.A.">
        <title>Genome sequencing and comparative analysis of Saccharomyces cerevisiae strain YJM789.</title>
        <authorList>
            <person name="Wei W."/>
            <person name="McCusker J.H."/>
            <person name="Hyman R.W."/>
            <person name="Jones T."/>
            <person name="Ning Y."/>
            <person name="Cao Z."/>
            <person name="Gu Z."/>
            <person name="Bruno D."/>
            <person name="Miranda M."/>
            <person name="Nguyen M."/>
            <person name="Wilhelmy J."/>
            <person name="Komp C."/>
            <person name="Tamse R."/>
            <person name="Wang X."/>
            <person name="Jia P."/>
            <person name="Luedi P."/>
            <person name="Oefner P.J."/>
            <person name="David L."/>
            <person name="Dietrich F.S."/>
            <person name="Li Y."/>
            <person name="Davis R.W."/>
            <person name="Steinmetz L.M."/>
        </authorList>
    </citation>
    <scope>NUCLEOTIDE SEQUENCE [LARGE SCALE GENOMIC DNA]</scope>
    <source>
        <strain>YJM789</strain>
    </source>
</reference>
<proteinExistence type="inferred from homology"/>
<organism>
    <name type="scientific">Saccharomyces cerevisiae (strain YJM789)</name>
    <name type="common">Baker's yeast</name>
    <dbReference type="NCBI Taxonomy" id="307796"/>
    <lineage>
        <taxon>Eukaryota</taxon>
        <taxon>Fungi</taxon>
        <taxon>Dikarya</taxon>
        <taxon>Ascomycota</taxon>
        <taxon>Saccharomycotina</taxon>
        <taxon>Saccharomycetes</taxon>
        <taxon>Saccharomycetales</taxon>
        <taxon>Saccharomycetaceae</taxon>
        <taxon>Saccharomyces</taxon>
    </lineage>
</organism>
<evidence type="ECO:0000250" key="1"/>
<evidence type="ECO:0000250" key="2">
    <source>
        <dbReference type="UniProtKB" id="P47136"/>
    </source>
</evidence>
<evidence type="ECO:0000255" key="3">
    <source>
        <dbReference type="PROSITE-ProRule" id="PRU00145"/>
    </source>
</evidence>
<evidence type="ECO:0000256" key="4">
    <source>
        <dbReference type="SAM" id="MobiDB-lite"/>
    </source>
</evidence>
<evidence type="ECO:0000305" key="5"/>